<gene>
    <name type="primary">Vat1l</name>
    <name type="synonym">Kiaa1576</name>
</gene>
<dbReference type="EC" id="1.-.-.-"/>
<dbReference type="EMBL" id="AK122527">
    <property type="protein sequence ID" value="BAC65809.1"/>
    <property type="status" value="ALT_INIT"/>
    <property type="molecule type" value="mRNA"/>
</dbReference>
<dbReference type="EMBL" id="BC056927">
    <property type="protein sequence ID" value="AAH56927.1"/>
    <property type="molecule type" value="mRNA"/>
</dbReference>
<dbReference type="CCDS" id="CCDS22689.1"/>
<dbReference type="RefSeq" id="NP_766604.2">
    <property type="nucleotide sequence ID" value="NM_173016.3"/>
</dbReference>
<dbReference type="SMR" id="Q80TB8"/>
<dbReference type="BioGRID" id="234760">
    <property type="interactions" value="4"/>
</dbReference>
<dbReference type="FunCoup" id="Q80TB8">
    <property type="interactions" value="242"/>
</dbReference>
<dbReference type="IntAct" id="Q80TB8">
    <property type="interactions" value="1"/>
</dbReference>
<dbReference type="STRING" id="10090.ENSMUSP00000053431"/>
<dbReference type="GlyGen" id="Q80TB8">
    <property type="glycosylation" value="1 site, 1 O-linked glycan (1 site)"/>
</dbReference>
<dbReference type="iPTMnet" id="Q80TB8"/>
<dbReference type="PhosphoSitePlus" id="Q80TB8"/>
<dbReference type="SwissPalm" id="Q80TB8"/>
<dbReference type="PaxDb" id="10090-ENSMUSP00000053431"/>
<dbReference type="PeptideAtlas" id="Q80TB8"/>
<dbReference type="ProteomicsDB" id="297911"/>
<dbReference type="Antibodypedia" id="30406">
    <property type="antibodies" value="151 antibodies from 18 providers"/>
</dbReference>
<dbReference type="DNASU" id="270097"/>
<dbReference type="Ensembl" id="ENSMUST00000049509.7">
    <property type="protein sequence ID" value="ENSMUSP00000053431.7"/>
    <property type="gene ID" value="ENSMUSG00000046844.7"/>
</dbReference>
<dbReference type="GeneID" id="270097"/>
<dbReference type="KEGG" id="mmu:270097"/>
<dbReference type="UCSC" id="uc009noa.1">
    <property type="organism name" value="mouse"/>
</dbReference>
<dbReference type="AGR" id="MGI:2142534"/>
<dbReference type="CTD" id="57687"/>
<dbReference type="MGI" id="MGI:2142534">
    <property type="gene designation" value="Vat1l"/>
</dbReference>
<dbReference type="VEuPathDB" id="HostDB:ENSMUSG00000046844"/>
<dbReference type="eggNOG" id="KOG1198">
    <property type="taxonomic scope" value="Eukaryota"/>
</dbReference>
<dbReference type="GeneTree" id="ENSGT00940000159184"/>
<dbReference type="HOGENOM" id="CLU_026673_3_1_1"/>
<dbReference type="InParanoid" id="Q80TB8"/>
<dbReference type="OMA" id="LVHPVID"/>
<dbReference type="OrthoDB" id="203908at2759"/>
<dbReference type="PhylomeDB" id="Q80TB8"/>
<dbReference type="TreeFam" id="TF314255"/>
<dbReference type="BioGRID-ORCS" id="270097">
    <property type="hits" value="2 hits in 77 CRISPR screens"/>
</dbReference>
<dbReference type="ChiTaRS" id="Vat1l">
    <property type="organism name" value="mouse"/>
</dbReference>
<dbReference type="PRO" id="PR:Q80TB8"/>
<dbReference type="Proteomes" id="UP000000589">
    <property type="component" value="Chromosome 8"/>
</dbReference>
<dbReference type="RNAct" id="Q80TB8">
    <property type="molecule type" value="protein"/>
</dbReference>
<dbReference type="Bgee" id="ENSMUSG00000046844">
    <property type="expression patterns" value="Expressed in habenula and 198 other cell types or tissues"/>
</dbReference>
<dbReference type="ExpressionAtlas" id="Q80TB8">
    <property type="expression patterns" value="baseline and differential"/>
</dbReference>
<dbReference type="GO" id="GO:0016491">
    <property type="term" value="F:oxidoreductase activity"/>
    <property type="evidence" value="ECO:0007669"/>
    <property type="project" value="UniProtKB-KW"/>
</dbReference>
<dbReference type="GO" id="GO:0008270">
    <property type="term" value="F:zinc ion binding"/>
    <property type="evidence" value="ECO:0007669"/>
    <property type="project" value="InterPro"/>
</dbReference>
<dbReference type="CDD" id="cd08275">
    <property type="entry name" value="MDR3"/>
    <property type="match status" value="1"/>
</dbReference>
<dbReference type="Gene3D" id="3.90.180.10">
    <property type="entry name" value="Medium-chain alcohol dehydrogenases, catalytic domain"/>
    <property type="match status" value="1"/>
</dbReference>
<dbReference type="Gene3D" id="3.40.50.720">
    <property type="entry name" value="NAD(P)-binding Rossmann-like Domain"/>
    <property type="match status" value="1"/>
</dbReference>
<dbReference type="InterPro" id="IPR013154">
    <property type="entry name" value="ADH-like_N"/>
</dbReference>
<dbReference type="InterPro" id="IPR011032">
    <property type="entry name" value="GroES-like_sf"/>
</dbReference>
<dbReference type="InterPro" id="IPR036291">
    <property type="entry name" value="NAD(P)-bd_dom_sf"/>
</dbReference>
<dbReference type="InterPro" id="IPR020843">
    <property type="entry name" value="PKS_ER"/>
</dbReference>
<dbReference type="InterPro" id="IPR002364">
    <property type="entry name" value="Quin_OxRdtase/zeta-crystal_CS"/>
</dbReference>
<dbReference type="InterPro" id="IPR052100">
    <property type="entry name" value="SV-ATPase_mito-regulator"/>
</dbReference>
<dbReference type="PANTHER" id="PTHR44054">
    <property type="entry name" value="SYNAPTIC VESICLE MEMBRANE PROTEIN VAT-1 HOMOLOG-LIKE"/>
    <property type="match status" value="1"/>
</dbReference>
<dbReference type="PANTHER" id="PTHR44054:SF2">
    <property type="entry name" value="SYNAPTIC VESICLE MEMBRANE PROTEIN VAT-1 HOMOLOG-LIKE"/>
    <property type="match status" value="1"/>
</dbReference>
<dbReference type="Pfam" id="PF08240">
    <property type="entry name" value="ADH_N"/>
    <property type="match status" value="1"/>
</dbReference>
<dbReference type="Pfam" id="PF13602">
    <property type="entry name" value="ADH_zinc_N_2"/>
    <property type="match status" value="1"/>
</dbReference>
<dbReference type="SMART" id="SM00829">
    <property type="entry name" value="PKS_ER"/>
    <property type="match status" value="1"/>
</dbReference>
<dbReference type="SUPFAM" id="SSF50129">
    <property type="entry name" value="GroES-like"/>
    <property type="match status" value="1"/>
</dbReference>
<dbReference type="SUPFAM" id="SSF51735">
    <property type="entry name" value="NAD(P)-binding Rossmann-fold domains"/>
    <property type="match status" value="1"/>
</dbReference>
<dbReference type="PROSITE" id="PS01162">
    <property type="entry name" value="QOR_ZETA_CRYSTAL"/>
    <property type="match status" value="1"/>
</dbReference>
<accession>Q80TB8</accession>
<accession>Q6PGM9</accession>
<organism>
    <name type="scientific">Mus musculus</name>
    <name type="common">Mouse</name>
    <dbReference type="NCBI Taxonomy" id="10090"/>
    <lineage>
        <taxon>Eukaryota</taxon>
        <taxon>Metazoa</taxon>
        <taxon>Chordata</taxon>
        <taxon>Craniata</taxon>
        <taxon>Vertebrata</taxon>
        <taxon>Euteleostomi</taxon>
        <taxon>Mammalia</taxon>
        <taxon>Eutheria</taxon>
        <taxon>Euarchontoglires</taxon>
        <taxon>Glires</taxon>
        <taxon>Rodentia</taxon>
        <taxon>Myomorpha</taxon>
        <taxon>Muroidea</taxon>
        <taxon>Muridae</taxon>
        <taxon>Murinae</taxon>
        <taxon>Mus</taxon>
        <taxon>Mus</taxon>
    </lineage>
</organism>
<protein>
    <recommendedName>
        <fullName>Synaptic vesicle membrane protein VAT-1 homolog-like</fullName>
        <ecNumber>1.-.-.-</ecNumber>
    </recommendedName>
</protein>
<proteinExistence type="evidence at protein level"/>
<reference key="1">
    <citation type="journal article" date="2003" name="DNA Res.">
        <title>Prediction of the coding sequences of mouse homologues of KIAA gene: II. The complete nucleotide sequences of 400 mouse KIAA-homologous cDNAs identified by screening of terminal sequences of cDNA clones randomly sampled from size-fractionated libraries.</title>
        <authorList>
            <person name="Okazaki N."/>
            <person name="Kikuno R."/>
            <person name="Ohara R."/>
            <person name="Inamoto S."/>
            <person name="Aizawa H."/>
            <person name="Yuasa S."/>
            <person name="Nakajima D."/>
            <person name="Nagase T."/>
            <person name="Ohara O."/>
            <person name="Koga H."/>
        </authorList>
    </citation>
    <scope>NUCLEOTIDE SEQUENCE [LARGE SCALE MRNA]</scope>
    <source>
        <tissue>Brain</tissue>
    </source>
</reference>
<reference key="2">
    <citation type="journal article" date="2004" name="Genome Res.">
        <title>The status, quality, and expansion of the NIH full-length cDNA project: the Mammalian Gene Collection (MGC).</title>
        <authorList>
            <consortium name="The MGC Project Team"/>
        </authorList>
    </citation>
    <scope>NUCLEOTIDE SEQUENCE [LARGE SCALE MRNA]</scope>
    <source>
        <strain>C57BL/6J</strain>
        <tissue>Brain</tissue>
    </source>
</reference>
<reference key="3">
    <citation type="journal article" date="2010" name="Cell">
        <title>A tissue-specific atlas of mouse protein phosphorylation and expression.</title>
        <authorList>
            <person name="Huttlin E.L."/>
            <person name="Jedrychowski M.P."/>
            <person name="Elias J.E."/>
            <person name="Goswami T."/>
            <person name="Rad R."/>
            <person name="Beausoleil S.A."/>
            <person name="Villen J."/>
            <person name="Haas W."/>
            <person name="Sowa M.E."/>
            <person name="Gygi S.P."/>
        </authorList>
    </citation>
    <scope>PHOSPHORYLATION [LARGE SCALE ANALYSIS] AT SER-390; THR-391; THR-393 AND SER-394</scope>
    <scope>IDENTIFICATION BY MASS SPECTROMETRY [LARGE SCALE ANALYSIS]</scope>
    <source>
        <tissue>Brain</tissue>
    </source>
</reference>
<sequence>MAKEGVEKAEETEQMIEKETSKEPAEGGDGSHRLGDAQEMRAVVLAGFGGLNKLRLSRKAMPEPQDGELKIRVKACGLNFIDLMVRQGNIDNPPKTPLVPGFECSGIVEALGDSVKGYEIGDRVMAFVNYNAWAEVVCTPVEFVYKIPDDMSFSEAAAFPMNFVTAYTMLFEIANLREGMSVLVHSAGGGVGQAVAQLCSTVPNVTVFGTASTFKHEAIKDSVTHLFDRNADYVQEVKRISAEGVDIVLDCLCGDNTGKGLSLLKPLGTYILYGSSNMVTGETKSFFSFAKSWWQVEKVNPIKLYEENKVIAGFSLLNLLFKQGRSGLIRGVVEKLIGLYNQKKIKPVVDSLWALEEVKEAMQRIHDRGNIGKLILDVEKTPTPLMANDSTETSEAGEEEEDHEGDSENKERMPFIQ</sequence>
<evidence type="ECO:0000256" key="1">
    <source>
        <dbReference type="SAM" id="MobiDB-lite"/>
    </source>
</evidence>
<evidence type="ECO:0000305" key="2"/>
<evidence type="ECO:0007744" key="3">
    <source>
    </source>
</evidence>
<comment type="similarity">
    <text evidence="2">Belongs to the zinc-containing alcohol dehydrogenase family. Quinone oxidoreductase subfamily.</text>
</comment>
<comment type="sequence caution" evidence="2">
    <conflict type="erroneous initiation">
        <sequence resource="EMBL-CDS" id="BAC65809"/>
    </conflict>
</comment>
<feature type="chain" id="PRO_0000160923" description="Synaptic vesicle membrane protein VAT-1 homolog-like">
    <location>
        <begin position="1"/>
        <end position="417"/>
    </location>
</feature>
<feature type="region of interest" description="Disordered" evidence="1">
    <location>
        <begin position="1"/>
        <end position="33"/>
    </location>
</feature>
<feature type="region of interest" description="Disordered" evidence="1">
    <location>
        <begin position="382"/>
        <end position="417"/>
    </location>
</feature>
<feature type="compositionally biased region" description="Acidic residues" evidence="1">
    <location>
        <begin position="395"/>
        <end position="405"/>
    </location>
</feature>
<feature type="compositionally biased region" description="Basic and acidic residues" evidence="1">
    <location>
        <begin position="406"/>
        <end position="417"/>
    </location>
</feature>
<feature type="modified residue" description="Phosphoserine" evidence="3">
    <location>
        <position position="390"/>
    </location>
</feature>
<feature type="modified residue" description="Phosphothreonine" evidence="3">
    <location>
        <position position="391"/>
    </location>
</feature>
<feature type="modified residue" description="Phosphothreonine" evidence="3">
    <location>
        <position position="393"/>
    </location>
</feature>
<feature type="modified residue" description="Phosphoserine" evidence="3">
    <location>
        <position position="394"/>
    </location>
</feature>
<name>VAT1L_MOUSE</name>
<keyword id="KW-0560">Oxidoreductase</keyword>
<keyword id="KW-0597">Phosphoprotein</keyword>
<keyword id="KW-1185">Reference proteome</keyword>